<evidence type="ECO:0000250" key="1"/>
<evidence type="ECO:0000250" key="2">
    <source>
        <dbReference type="UniProtKB" id="P81782"/>
    </source>
</evidence>
<evidence type="ECO:0000250" key="3">
    <source>
        <dbReference type="UniProtKB" id="P81783"/>
    </source>
</evidence>
<evidence type="ECO:0000255" key="4"/>
<evidence type="ECO:0000303" key="5">
    <source>
    </source>
</evidence>
<evidence type="ECO:0000305" key="6"/>
<feature type="signal peptide" evidence="4">
    <location>
        <begin position="1"/>
        <end position="21"/>
    </location>
</feature>
<feature type="chain" id="PRO_0000251733" description="Neurotoxin BM10-1-like">
    <location>
        <begin position="22"/>
        <end position="84"/>
    </location>
</feature>
<feature type="disulfide bond" evidence="2">
    <location>
        <begin position="24"/>
        <end position="47"/>
    </location>
</feature>
<feature type="disulfide bond" evidence="2">
    <location>
        <begin position="27"/>
        <end position="32"/>
    </location>
</feature>
<feature type="disulfide bond" evidence="2">
    <location>
        <begin position="40"/>
        <end position="64"/>
    </location>
</feature>
<feature type="disulfide bond" evidence="2">
    <location>
        <begin position="68"/>
        <end position="76"/>
    </location>
</feature>
<feature type="disulfide bond" evidence="2">
    <location>
        <begin position="77"/>
        <end position="82"/>
    </location>
</feature>
<accession>Q70WS8</accession>
<name>3NO41_BUNMU</name>
<proteinExistence type="inferred from homology"/>
<reference key="1">
    <citation type="journal article" date="2003" name="Toxicon">
        <title>Novel neurotoxins from Taiwan banded krait (Bungarus multicinctus) venom: purification, characterization and gene organization.</title>
        <authorList>
            <person name="Chang L.-S."/>
            <person name="Chung C."/>
            <person name="Liou J.-C."/>
            <person name="Chang C.-W."/>
            <person name="Yang C.-C."/>
        </authorList>
    </citation>
    <scope>NUCLEOTIDE SEQUENCE [GENOMIC DNA]</scope>
    <source>
        <tissue>Liver</tissue>
    </source>
</reference>
<comment type="function">
    <text evidence="3">Binds and inhibits muscular and neuronal nicotinic acetylcholine receptors (nAChR).</text>
</comment>
<comment type="subcellular location">
    <subcellularLocation>
        <location evidence="1">Secreted</location>
    </subcellularLocation>
</comment>
<comment type="tissue specificity">
    <text evidence="6">Expressed by the venom gland.</text>
</comment>
<comment type="similarity">
    <text evidence="6">Belongs to the three-finger toxin family. Ancestral subfamily. Orphan group IV sub-subfamily.</text>
</comment>
<protein>
    <recommendedName>
        <fullName evidence="5">Neurotoxin BM10-1-like</fullName>
        <shortName evidence="5">BM10-1l</shortName>
    </recommendedName>
</protein>
<dbReference type="EMBL" id="AJ515364">
    <property type="protein sequence ID" value="CAD56381.1"/>
    <property type="molecule type" value="Genomic_DNA"/>
</dbReference>
<dbReference type="SMR" id="Q70WS8"/>
<dbReference type="GO" id="GO:0005576">
    <property type="term" value="C:extracellular region"/>
    <property type="evidence" value="ECO:0007669"/>
    <property type="project" value="UniProtKB-SubCell"/>
</dbReference>
<dbReference type="GO" id="GO:0030550">
    <property type="term" value="F:acetylcholine receptor inhibitor activity"/>
    <property type="evidence" value="ECO:0007669"/>
    <property type="project" value="UniProtKB-KW"/>
</dbReference>
<dbReference type="GO" id="GO:0099106">
    <property type="term" value="F:ion channel regulator activity"/>
    <property type="evidence" value="ECO:0007669"/>
    <property type="project" value="UniProtKB-KW"/>
</dbReference>
<dbReference type="GO" id="GO:0090729">
    <property type="term" value="F:toxin activity"/>
    <property type="evidence" value="ECO:0007669"/>
    <property type="project" value="UniProtKB-KW"/>
</dbReference>
<dbReference type="CDD" id="cd00206">
    <property type="entry name" value="TFP_snake_toxin"/>
    <property type="match status" value="1"/>
</dbReference>
<dbReference type="Gene3D" id="2.10.60.10">
    <property type="entry name" value="CD59"/>
    <property type="match status" value="1"/>
</dbReference>
<dbReference type="InterPro" id="IPR003571">
    <property type="entry name" value="Snake_3FTx"/>
</dbReference>
<dbReference type="InterPro" id="IPR045860">
    <property type="entry name" value="Snake_toxin-like_sf"/>
</dbReference>
<dbReference type="InterPro" id="IPR054131">
    <property type="entry name" value="Toxin_cobra-type"/>
</dbReference>
<dbReference type="Pfam" id="PF21947">
    <property type="entry name" value="Toxin_cobra-type"/>
    <property type="match status" value="1"/>
</dbReference>
<dbReference type="SUPFAM" id="SSF57302">
    <property type="entry name" value="Snake toxin-like"/>
    <property type="match status" value="1"/>
</dbReference>
<sequence>MKTLLLTLVVVTIVCLDLGYTMKCKICHFDTCRAGELKVCASGEKYCFKESWREAREVKIIRGCSSSCPEKKNVFCCSTNDCNW</sequence>
<keyword id="KW-0008">Acetylcholine receptor inhibiting toxin</keyword>
<keyword id="KW-1015">Disulfide bond</keyword>
<keyword id="KW-0872">Ion channel impairing toxin</keyword>
<keyword id="KW-0528">Neurotoxin</keyword>
<keyword id="KW-0629">Postsynaptic neurotoxin</keyword>
<keyword id="KW-0964">Secreted</keyword>
<keyword id="KW-0732">Signal</keyword>
<keyword id="KW-0800">Toxin</keyword>
<organism>
    <name type="scientific">Bungarus multicinctus</name>
    <name type="common">Many-banded krait</name>
    <dbReference type="NCBI Taxonomy" id="8616"/>
    <lineage>
        <taxon>Eukaryota</taxon>
        <taxon>Metazoa</taxon>
        <taxon>Chordata</taxon>
        <taxon>Craniata</taxon>
        <taxon>Vertebrata</taxon>
        <taxon>Euteleostomi</taxon>
        <taxon>Lepidosauria</taxon>
        <taxon>Squamata</taxon>
        <taxon>Bifurcata</taxon>
        <taxon>Unidentata</taxon>
        <taxon>Episquamata</taxon>
        <taxon>Toxicofera</taxon>
        <taxon>Serpentes</taxon>
        <taxon>Colubroidea</taxon>
        <taxon>Elapidae</taxon>
        <taxon>Bungarinae</taxon>
        <taxon>Bungarus</taxon>
    </lineage>
</organism>